<feature type="chain" id="PRO_1000048183" description="Cytidylate kinase">
    <location>
        <begin position="1"/>
        <end position="225"/>
    </location>
</feature>
<feature type="binding site" evidence="1">
    <location>
        <begin position="11"/>
        <end position="19"/>
    </location>
    <ligand>
        <name>ATP</name>
        <dbReference type="ChEBI" id="CHEBI:30616"/>
    </ligand>
</feature>
<reference key="1">
    <citation type="journal article" date="2007" name="J. Bacteriol.">
        <title>The complete genome sequence of Bacillus thuringiensis Al Hakam.</title>
        <authorList>
            <person name="Challacombe J.F."/>
            <person name="Altherr M.R."/>
            <person name="Xie G."/>
            <person name="Bhotika S.S."/>
            <person name="Brown N."/>
            <person name="Bruce D."/>
            <person name="Campbell C.S."/>
            <person name="Campbell M.L."/>
            <person name="Chen J."/>
            <person name="Chertkov O."/>
            <person name="Cleland C."/>
            <person name="Dimitrijevic M."/>
            <person name="Doggett N.A."/>
            <person name="Fawcett J.J."/>
            <person name="Glavina T."/>
            <person name="Goodwin L.A."/>
            <person name="Green L.D."/>
            <person name="Han C.S."/>
            <person name="Hill K.K."/>
            <person name="Hitchcock P."/>
            <person name="Jackson P.J."/>
            <person name="Keim P."/>
            <person name="Kewalramani A.R."/>
            <person name="Longmire J."/>
            <person name="Lucas S."/>
            <person name="Malfatti S."/>
            <person name="Martinez D."/>
            <person name="McMurry K."/>
            <person name="Meincke L.J."/>
            <person name="Misra M."/>
            <person name="Moseman B.L."/>
            <person name="Mundt M."/>
            <person name="Munk A.C."/>
            <person name="Okinaka R.T."/>
            <person name="Parson-Quintana B."/>
            <person name="Reilly L.P."/>
            <person name="Richardson P."/>
            <person name="Robinson D.L."/>
            <person name="Saunders E."/>
            <person name="Tapia R."/>
            <person name="Tesmer J.G."/>
            <person name="Thayer N."/>
            <person name="Thompson L.S."/>
            <person name="Tice H."/>
            <person name="Ticknor L.O."/>
            <person name="Wills P.L."/>
            <person name="Gilna P."/>
            <person name="Brettin T.S."/>
        </authorList>
    </citation>
    <scope>NUCLEOTIDE SEQUENCE [LARGE SCALE GENOMIC DNA]</scope>
    <source>
        <strain>Al Hakam</strain>
    </source>
</reference>
<dbReference type="EC" id="2.7.4.25" evidence="1"/>
<dbReference type="EMBL" id="CP000485">
    <property type="protein sequence ID" value="ABK84695.1"/>
    <property type="molecule type" value="Genomic_DNA"/>
</dbReference>
<dbReference type="RefSeq" id="WP_000361264.1">
    <property type="nucleotide sequence ID" value="NC_008600.1"/>
</dbReference>
<dbReference type="SMR" id="A0RBV2"/>
<dbReference type="GeneID" id="93009543"/>
<dbReference type="KEGG" id="btl:BALH_1352"/>
<dbReference type="HOGENOM" id="CLU_079959_0_2_9"/>
<dbReference type="GO" id="GO:0005829">
    <property type="term" value="C:cytosol"/>
    <property type="evidence" value="ECO:0007669"/>
    <property type="project" value="TreeGrafter"/>
</dbReference>
<dbReference type="GO" id="GO:0005524">
    <property type="term" value="F:ATP binding"/>
    <property type="evidence" value="ECO:0007669"/>
    <property type="project" value="UniProtKB-UniRule"/>
</dbReference>
<dbReference type="GO" id="GO:0036430">
    <property type="term" value="F:CMP kinase activity"/>
    <property type="evidence" value="ECO:0007669"/>
    <property type="project" value="RHEA"/>
</dbReference>
<dbReference type="GO" id="GO:0036431">
    <property type="term" value="F:dCMP kinase activity"/>
    <property type="evidence" value="ECO:0007669"/>
    <property type="project" value="RHEA"/>
</dbReference>
<dbReference type="GO" id="GO:0015949">
    <property type="term" value="P:nucleobase-containing small molecule interconversion"/>
    <property type="evidence" value="ECO:0007669"/>
    <property type="project" value="TreeGrafter"/>
</dbReference>
<dbReference type="GO" id="GO:0006220">
    <property type="term" value="P:pyrimidine nucleotide metabolic process"/>
    <property type="evidence" value="ECO:0007669"/>
    <property type="project" value="UniProtKB-UniRule"/>
</dbReference>
<dbReference type="CDD" id="cd02020">
    <property type="entry name" value="CMPK"/>
    <property type="match status" value="1"/>
</dbReference>
<dbReference type="FunFam" id="3.40.50.300:FF:000484">
    <property type="entry name" value="Cytidylate kinase"/>
    <property type="match status" value="1"/>
</dbReference>
<dbReference type="Gene3D" id="3.40.50.300">
    <property type="entry name" value="P-loop containing nucleotide triphosphate hydrolases"/>
    <property type="match status" value="1"/>
</dbReference>
<dbReference type="HAMAP" id="MF_00238">
    <property type="entry name" value="Cytidyl_kinase_type1"/>
    <property type="match status" value="1"/>
</dbReference>
<dbReference type="InterPro" id="IPR003136">
    <property type="entry name" value="Cytidylate_kin"/>
</dbReference>
<dbReference type="InterPro" id="IPR011994">
    <property type="entry name" value="Cytidylate_kinase_dom"/>
</dbReference>
<dbReference type="InterPro" id="IPR027417">
    <property type="entry name" value="P-loop_NTPase"/>
</dbReference>
<dbReference type="NCBIfam" id="TIGR00017">
    <property type="entry name" value="cmk"/>
    <property type="match status" value="1"/>
</dbReference>
<dbReference type="PANTHER" id="PTHR21299:SF2">
    <property type="entry name" value="CYTIDYLATE KINASE"/>
    <property type="match status" value="1"/>
</dbReference>
<dbReference type="PANTHER" id="PTHR21299">
    <property type="entry name" value="CYTIDYLATE KINASE/PANTOATE-BETA-ALANINE LIGASE"/>
    <property type="match status" value="1"/>
</dbReference>
<dbReference type="Pfam" id="PF02224">
    <property type="entry name" value="Cytidylate_kin"/>
    <property type="match status" value="1"/>
</dbReference>
<dbReference type="SUPFAM" id="SSF52540">
    <property type="entry name" value="P-loop containing nucleoside triphosphate hydrolases"/>
    <property type="match status" value="1"/>
</dbReference>
<protein>
    <recommendedName>
        <fullName evidence="1">Cytidylate kinase</fullName>
        <shortName evidence="1">CK</shortName>
        <ecNumber evidence="1">2.7.4.25</ecNumber>
    </recommendedName>
    <alternativeName>
        <fullName evidence="1">Cytidine monophosphate kinase</fullName>
        <shortName evidence="1">CMP kinase</shortName>
    </alternativeName>
</protein>
<comment type="catalytic activity">
    <reaction evidence="1">
        <text>CMP + ATP = CDP + ADP</text>
        <dbReference type="Rhea" id="RHEA:11600"/>
        <dbReference type="ChEBI" id="CHEBI:30616"/>
        <dbReference type="ChEBI" id="CHEBI:58069"/>
        <dbReference type="ChEBI" id="CHEBI:60377"/>
        <dbReference type="ChEBI" id="CHEBI:456216"/>
        <dbReference type="EC" id="2.7.4.25"/>
    </reaction>
</comment>
<comment type="catalytic activity">
    <reaction evidence="1">
        <text>dCMP + ATP = dCDP + ADP</text>
        <dbReference type="Rhea" id="RHEA:25094"/>
        <dbReference type="ChEBI" id="CHEBI:30616"/>
        <dbReference type="ChEBI" id="CHEBI:57566"/>
        <dbReference type="ChEBI" id="CHEBI:58593"/>
        <dbReference type="ChEBI" id="CHEBI:456216"/>
        <dbReference type="EC" id="2.7.4.25"/>
    </reaction>
</comment>
<comment type="subcellular location">
    <subcellularLocation>
        <location evidence="1">Cytoplasm</location>
    </subcellularLocation>
</comment>
<comment type="similarity">
    <text evidence="1">Belongs to the cytidylate kinase family. Type 1 subfamily.</text>
</comment>
<gene>
    <name evidence="1" type="primary">cmk</name>
    <name type="ordered locus">BALH_1352</name>
</gene>
<evidence type="ECO:0000255" key="1">
    <source>
        <dbReference type="HAMAP-Rule" id="MF_00238"/>
    </source>
</evidence>
<proteinExistence type="inferred from homology"/>
<accession>A0RBV2</accession>
<keyword id="KW-0067">ATP-binding</keyword>
<keyword id="KW-0963">Cytoplasm</keyword>
<keyword id="KW-0418">Kinase</keyword>
<keyword id="KW-0547">Nucleotide-binding</keyword>
<keyword id="KW-0808">Transferase</keyword>
<organism>
    <name type="scientific">Bacillus thuringiensis (strain Al Hakam)</name>
    <dbReference type="NCBI Taxonomy" id="412694"/>
    <lineage>
        <taxon>Bacteria</taxon>
        <taxon>Bacillati</taxon>
        <taxon>Bacillota</taxon>
        <taxon>Bacilli</taxon>
        <taxon>Bacillales</taxon>
        <taxon>Bacillaceae</taxon>
        <taxon>Bacillus</taxon>
        <taxon>Bacillus cereus group</taxon>
    </lineage>
</organism>
<name>KCY_BACAH</name>
<sequence length="225" mass="25259">MDKRISIAIDGPAAAGKSTVAKVVAKKLSYVYIDTGAMYRTITYAALEQKVDIENEEQLMEVVKNVKIEFQQGENTQLVFLNGQDVSEVIRTPEVTNRVSIVAKHRLVREEMVRRQQELAEKGGVVMDGRDIGTHVLPDAEVKIFMLASVEERAERRHLENMNKGFDSNLEQLKEEIAQRDKLDSEREVSPLKKADDALELDTTSLSIEEVVQKIMGIVSGVFAK</sequence>